<comment type="subcellular location">
    <subcellularLocation>
        <location evidence="3">Nucleus</location>
    </subcellularLocation>
</comment>
<comment type="similarity">
    <text evidence="5">Belongs to the AAA ATPase family.</text>
</comment>
<dbReference type="EMBL" id="CU329671">
    <property type="protein sequence ID" value="CAB16902.1"/>
    <property type="molecule type" value="Genomic_DNA"/>
</dbReference>
<dbReference type="PIR" id="T39584">
    <property type="entry name" value="T39584"/>
</dbReference>
<dbReference type="SMR" id="O14325"/>
<dbReference type="BioGRID" id="276512">
    <property type="interactions" value="11"/>
</dbReference>
<dbReference type="FunCoup" id="O14325">
    <property type="interactions" value="922"/>
</dbReference>
<dbReference type="STRING" id="284812.O14325"/>
<dbReference type="iPTMnet" id="O14325"/>
<dbReference type="PaxDb" id="4896-SPBC16E9.10c.1"/>
<dbReference type="EnsemblFungi" id="SPBC16E9.10c.1">
    <property type="protein sequence ID" value="SPBC16E9.10c.1:pep"/>
    <property type="gene ID" value="SPBC16E9.10c"/>
</dbReference>
<dbReference type="KEGG" id="spo:2539968"/>
<dbReference type="PomBase" id="SPBC16E9.10c"/>
<dbReference type="VEuPathDB" id="FungiDB:SPBC16E9.10c"/>
<dbReference type="eggNOG" id="KOG0733">
    <property type="taxonomic scope" value="Eukaryota"/>
</dbReference>
<dbReference type="HOGENOM" id="CLU_000688_8_3_1"/>
<dbReference type="InParanoid" id="O14325"/>
<dbReference type="OMA" id="GLWSTHR"/>
<dbReference type="PhylomeDB" id="O14325"/>
<dbReference type="PRO" id="PR:O14325"/>
<dbReference type="Proteomes" id="UP000002485">
    <property type="component" value="Chromosome II"/>
</dbReference>
<dbReference type="GO" id="GO:0005730">
    <property type="term" value="C:nucleolus"/>
    <property type="evidence" value="ECO:0000314"/>
    <property type="project" value="PomBase"/>
</dbReference>
<dbReference type="GO" id="GO:0005634">
    <property type="term" value="C:nucleus"/>
    <property type="evidence" value="ECO:0007005"/>
    <property type="project" value="PomBase"/>
</dbReference>
<dbReference type="GO" id="GO:0005524">
    <property type="term" value="F:ATP binding"/>
    <property type="evidence" value="ECO:0007669"/>
    <property type="project" value="UniProtKB-KW"/>
</dbReference>
<dbReference type="GO" id="GO:0016887">
    <property type="term" value="F:ATP hydrolysis activity"/>
    <property type="evidence" value="ECO:0000318"/>
    <property type="project" value="GO_Central"/>
</dbReference>
<dbReference type="GO" id="GO:1990275">
    <property type="term" value="F:preribosome binding"/>
    <property type="evidence" value="ECO:0000318"/>
    <property type="project" value="GO_Central"/>
</dbReference>
<dbReference type="GO" id="GO:0180023">
    <property type="term" value="P:cytosolic large ribosomal subunit assembly"/>
    <property type="evidence" value="ECO:0000304"/>
    <property type="project" value="PomBase"/>
</dbReference>
<dbReference type="GO" id="GO:0042254">
    <property type="term" value="P:ribosome biogenesis"/>
    <property type="evidence" value="ECO:0000318"/>
    <property type="project" value="GO_Central"/>
</dbReference>
<dbReference type="CDD" id="cd19518">
    <property type="entry name" value="RecA-like_NVL_r1-like"/>
    <property type="match status" value="1"/>
</dbReference>
<dbReference type="CDD" id="cd19530">
    <property type="entry name" value="RecA-like_NVL_r2-like"/>
    <property type="match status" value="1"/>
</dbReference>
<dbReference type="FunFam" id="3.40.50.300:FF:000018">
    <property type="entry name" value="Cell division control 48"/>
    <property type="match status" value="1"/>
</dbReference>
<dbReference type="FunFam" id="1.10.8.60:FF:000110">
    <property type="entry name" value="Ribosome biogenesis ATPase RIX7"/>
    <property type="match status" value="1"/>
</dbReference>
<dbReference type="FunFam" id="3.40.50.300:FF:000365">
    <property type="entry name" value="Ribosome biogenesis ATPase RIX7"/>
    <property type="match status" value="1"/>
</dbReference>
<dbReference type="Gene3D" id="1.10.8.60">
    <property type="match status" value="2"/>
</dbReference>
<dbReference type="Gene3D" id="3.40.50.300">
    <property type="entry name" value="P-loop containing nucleotide triphosphate hydrolases"/>
    <property type="match status" value="2"/>
</dbReference>
<dbReference type="InterPro" id="IPR003593">
    <property type="entry name" value="AAA+_ATPase"/>
</dbReference>
<dbReference type="InterPro" id="IPR050168">
    <property type="entry name" value="AAA_ATPase_domain"/>
</dbReference>
<dbReference type="InterPro" id="IPR041569">
    <property type="entry name" value="AAA_lid_3"/>
</dbReference>
<dbReference type="InterPro" id="IPR003959">
    <property type="entry name" value="ATPase_AAA_core"/>
</dbReference>
<dbReference type="InterPro" id="IPR003960">
    <property type="entry name" value="ATPase_AAA_CS"/>
</dbReference>
<dbReference type="InterPro" id="IPR027417">
    <property type="entry name" value="P-loop_NTPase"/>
</dbReference>
<dbReference type="PANTHER" id="PTHR23077">
    <property type="entry name" value="AAA-FAMILY ATPASE"/>
    <property type="match status" value="1"/>
</dbReference>
<dbReference type="PANTHER" id="PTHR23077:SF171">
    <property type="entry name" value="NUCLEAR VALOSIN-CONTAINING PROTEIN-LIKE"/>
    <property type="match status" value="1"/>
</dbReference>
<dbReference type="Pfam" id="PF00004">
    <property type="entry name" value="AAA"/>
    <property type="match status" value="2"/>
</dbReference>
<dbReference type="Pfam" id="PF17862">
    <property type="entry name" value="AAA_lid_3"/>
    <property type="match status" value="2"/>
</dbReference>
<dbReference type="SMART" id="SM00382">
    <property type="entry name" value="AAA"/>
    <property type="match status" value="2"/>
</dbReference>
<dbReference type="SUPFAM" id="SSF52540">
    <property type="entry name" value="P-loop containing nucleoside triphosphate hydrolases"/>
    <property type="match status" value="2"/>
</dbReference>
<dbReference type="PROSITE" id="PS00674">
    <property type="entry name" value="AAA"/>
    <property type="match status" value="1"/>
</dbReference>
<evidence type="ECO:0000255" key="1"/>
<evidence type="ECO:0000256" key="2">
    <source>
        <dbReference type="SAM" id="MobiDB-lite"/>
    </source>
</evidence>
<evidence type="ECO:0000269" key="3">
    <source>
    </source>
</evidence>
<evidence type="ECO:0000269" key="4">
    <source>
    </source>
</evidence>
<evidence type="ECO:0000305" key="5"/>
<protein>
    <recommendedName>
        <fullName>Uncharacterized AAA domain-containing protein C16E9.10c</fullName>
    </recommendedName>
</protein>
<keyword id="KW-0067">ATP-binding</keyword>
<keyword id="KW-0547">Nucleotide-binding</keyword>
<keyword id="KW-0539">Nucleus</keyword>
<keyword id="KW-0597">Phosphoprotein</keyword>
<keyword id="KW-1185">Reference proteome</keyword>
<keyword id="KW-0677">Repeat</keyword>
<proteinExistence type="evidence at protein level"/>
<sequence>MRRSGTSLSRDLERKIHERLVSLKDTIQQTEIEEWPVSTRRAIQFVQERDMSLRRIKKPILEKVVEKVLDTLKAEVEEKLASSQDLVLVDSDMEEQSDSNLMEVKDTNVINKSITSLWSSPNLKEIDGEDEKKSVGQESITGSAKRKDRRSKTNGSKRQKAEANREPPSDISLSDIGGLDDCINELLELVAMPIKHPEVYQYTGIHPPRGVLLHGPPGCGKTMLANALANELGVPFISISAPSIVSGMSGESEKKVREVFEEAKSLAPCLMFIDEIDAVTPKRESAQREMERRIVAQFLTCMDELSFEKTDGKPVLVIGATNRPDSLDSALRRAGRFDREICLTVPSQDAREKILRTMAKGLKLSGDFDFRQLAKQTPGYVGADLKALTAAAGIIAIKRIFNEISPLNKLDLNSDPRFNELDSDMALDSNDSLPLDHSSIIQRYLNAHPDPLSPEELEPLAICPQDFIEALAKVQPSSKREGFATVPGVSWNNIGALKSIRVELQMAIVQPIKRPELYQSVGISAPTGVLLWGPPGCGKTLLAKAVANESKANFISIRGPELLNKYVGESERAVRQVFLRARASSPCVIFFDELDAMVPRRDDSLSEASSRVVNTLLTELDGLSDRSGVYVIAATNRPDIIDPAMLRPGRLDKTLLVDLPDAHERVEILKTLTKQTPLHEEVNLDVLGRDERCSNFSGADLAALVREAAVTALRSAVFADIASNEPEITQHSALEPIRVTNADFELAFKNIKPSVSDRDRQKYQRLAKRWSSASTNDAD</sequence>
<accession>O14325</accession>
<name>YB7A_SCHPO</name>
<feature type="chain" id="PRO_0000310279" description="Uncharacterized AAA domain-containing protein C16E9.10c">
    <location>
        <begin position="1"/>
        <end position="779"/>
    </location>
</feature>
<feature type="region of interest" description="Disordered" evidence="2">
    <location>
        <begin position="125"/>
        <end position="174"/>
    </location>
</feature>
<feature type="region of interest" description="Disordered" evidence="2">
    <location>
        <begin position="759"/>
        <end position="779"/>
    </location>
</feature>
<feature type="compositionally biased region" description="Basic and acidic residues" evidence="2">
    <location>
        <begin position="125"/>
        <end position="135"/>
    </location>
</feature>
<feature type="compositionally biased region" description="Basic residues" evidence="2">
    <location>
        <begin position="144"/>
        <end position="158"/>
    </location>
</feature>
<feature type="compositionally biased region" description="Basic and acidic residues" evidence="2">
    <location>
        <begin position="159"/>
        <end position="168"/>
    </location>
</feature>
<feature type="binding site" evidence="1">
    <location>
        <begin position="215"/>
        <end position="222"/>
    </location>
    <ligand>
        <name>ATP</name>
        <dbReference type="ChEBI" id="CHEBI:30616"/>
    </ligand>
</feature>
<feature type="binding site" evidence="1">
    <location>
        <begin position="533"/>
        <end position="540"/>
    </location>
    <ligand>
        <name>ATP</name>
        <dbReference type="ChEBI" id="CHEBI:30616"/>
    </ligand>
</feature>
<feature type="modified residue" description="Phosphoserine" evidence="4">
    <location>
        <position position="97"/>
    </location>
</feature>
<feature type="modified residue" description="Phosphoserine" evidence="4">
    <location>
        <position position="120"/>
    </location>
</feature>
<gene>
    <name type="ORF">SPBC16E9.10c</name>
</gene>
<organism>
    <name type="scientific">Schizosaccharomyces pombe (strain 972 / ATCC 24843)</name>
    <name type="common">Fission yeast</name>
    <dbReference type="NCBI Taxonomy" id="284812"/>
    <lineage>
        <taxon>Eukaryota</taxon>
        <taxon>Fungi</taxon>
        <taxon>Dikarya</taxon>
        <taxon>Ascomycota</taxon>
        <taxon>Taphrinomycotina</taxon>
        <taxon>Schizosaccharomycetes</taxon>
        <taxon>Schizosaccharomycetales</taxon>
        <taxon>Schizosaccharomycetaceae</taxon>
        <taxon>Schizosaccharomyces</taxon>
    </lineage>
</organism>
<reference key="1">
    <citation type="journal article" date="2002" name="Nature">
        <title>The genome sequence of Schizosaccharomyces pombe.</title>
        <authorList>
            <person name="Wood V."/>
            <person name="Gwilliam R."/>
            <person name="Rajandream M.A."/>
            <person name="Lyne M.H."/>
            <person name="Lyne R."/>
            <person name="Stewart A."/>
            <person name="Sgouros J.G."/>
            <person name="Peat N."/>
            <person name="Hayles J."/>
            <person name="Baker S.G."/>
            <person name="Basham D."/>
            <person name="Bowman S."/>
            <person name="Brooks K."/>
            <person name="Brown D."/>
            <person name="Brown S."/>
            <person name="Chillingworth T."/>
            <person name="Churcher C.M."/>
            <person name="Collins M."/>
            <person name="Connor R."/>
            <person name="Cronin A."/>
            <person name="Davis P."/>
            <person name="Feltwell T."/>
            <person name="Fraser A."/>
            <person name="Gentles S."/>
            <person name="Goble A."/>
            <person name="Hamlin N."/>
            <person name="Harris D.E."/>
            <person name="Hidalgo J."/>
            <person name="Hodgson G."/>
            <person name="Holroyd S."/>
            <person name="Hornsby T."/>
            <person name="Howarth S."/>
            <person name="Huckle E.J."/>
            <person name="Hunt S."/>
            <person name="Jagels K."/>
            <person name="James K.D."/>
            <person name="Jones L."/>
            <person name="Jones M."/>
            <person name="Leather S."/>
            <person name="McDonald S."/>
            <person name="McLean J."/>
            <person name="Mooney P."/>
            <person name="Moule S."/>
            <person name="Mungall K.L."/>
            <person name="Murphy L.D."/>
            <person name="Niblett D."/>
            <person name="Odell C."/>
            <person name="Oliver K."/>
            <person name="O'Neil S."/>
            <person name="Pearson D."/>
            <person name="Quail M.A."/>
            <person name="Rabbinowitsch E."/>
            <person name="Rutherford K.M."/>
            <person name="Rutter S."/>
            <person name="Saunders D."/>
            <person name="Seeger K."/>
            <person name="Sharp S."/>
            <person name="Skelton J."/>
            <person name="Simmonds M.N."/>
            <person name="Squares R."/>
            <person name="Squares S."/>
            <person name="Stevens K."/>
            <person name="Taylor K."/>
            <person name="Taylor R.G."/>
            <person name="Tivey A."/>
            <person name="Walsh S.V."/>
            <person name="Warren T."/>
            <person name="Whitehead S."/>
            <person name="Woodward J.R."/>
            <person name="Volckaert G."/>
            <person name="Aert R."/>
            <person name="Robben J."/>
            <person name="Grymonprez B."/>
            <person name="Weltjens I."/>
            <person name="Vanstreels E."/>
            <person name="Rieger M."/>
            <person name="Schaefer M."/>
            <person name="Mueller-Auer S."/>
            <person name="Gabel C."/>
            <person name="Fuchs M."/>
            <person name="Duesterhoeft A."/>
            <person name="Fritzc C."/>
            <person name="Holzer E."/>
            <person name="Moestl D."/>
            <person name="Hilbert H."/>
            <person name="Borzym K."/>
            <person name="Langer I."/>
            <person name="Beck A."/>
            <person name="Lehrach H."/>
            <person name="Reinhardt R."/>
            <person name="Pohl T.M."/>
            <person name="Eger P."/>
            <person name="Zimmermann W."/>
            <person name="Wedler H."/>
            <person name="Wambutt R."/>
            <person name="Purnelle B."/>
            <person name="Goffeau A."/>
            <person name="Cadieu E."/>
            <person name="Dreano S."/>
            <person name="Gloux S."/>
            <person name="Lelaure V."/>
            <person name="Mottier S."/>
            <person name="Galibert F."/>
            <person name="Aves S.J."/>
            <person name="Xiang Z."/>
            <person name="Hunt C."/>
            <person name="Moore K."/>
            <person name="Hurst S.M."/>
            <person name="Lucas M."/>
            <person name="Rochet M."/>
            <person name="Gaillardin C."/>
            <person name="Tallada V.A."/>
            <person name="Garzon A."/>
            <person name="Thode G."/>
            <person name="Daga R.R."/>
            <person name="Cruzado L."/>
            <person name="Jimenez J."/>
            <person name="Sanchez M."/>
            <person name="del Rey F."/>
            <person name="Benito J."/>
            <person name="Dominguez A."/>
            <person name="Revuelta J.L."/>
            <person name="Moreno S."/>
            <person name="Armstrong J."/>
            <person name="Forsburg S.L."/>
            <person name="Cerutti L."/>
            <person name="Lowe T."/>
            <person name="McCombie W.R."/>
            <person name="Paulsen I."/>
            <person name="Potashkin J."/>
            <person name="Shpakovski G.V."/>
            <person name="Ussery D."/>
            <person name="Barrell B.G."/>
            <person name="Nurse P."/>
        </authorList>
    </citation>
    <scope>NUCLEOTIDE SEQUENCE [LARGE SCALE GENOMIC DNA]</scope>
    <source>
        <strain>972 / ATCC 24843</strain>
    </source>
</reference>
<reference key="2">
    <citation type="journal article" date="2006" name="Nat. Biotechnol.">
        <title>ORFeome cloning and global analysis of protein localization in the fission yeast Schizosaccharomyces pombe.</title>
        <authorList>
            <person name="Matsuyama A."/>
            <person name="Arai R."/>
            <person name="Yashiroda Y."/>
            <person name="Shirai A."/>
            <person name="Kamata A."/>
            <person name="Sekido S."/>
            <person name="Kobayashi Y."/>
            <person name="Hashimoto A."/>
            <person name="Hamamoto M."/>
            <person name="Hiraoka Y."/>
            <person name="Horinouchi S."/>
            <person name="Yoshida M."/>
        </authorList>
    </citation>
    <scope>SUBCELLULAR LOCATION [LARGE SCALE ANALYSIS]</scope>
</reference>
<reference key="3">
    <citation type="journal article" date="2008" name="J. Proteome Res.">
        <title>Phosphoproteome analysis of fission yeast.</title>
        <authorList>
            <person name="Wilson-Grady J.T."/>
            <person name="Villen J."/>
            <person name="Gygi S.P."/>
        </authorList>
    </citation>
    <scope>PHOSPHORYLATION [LARGE SCALE ANALYSIS] AT SER-97 AND SER-120</scope>
    <scope>IDENTIFICATION BY MASS SPECTROMETRY</scope>
</reference>